<reference key="1">
    <citation type="journal article" date="2011" name="J. Bacteriol.">
        <title>Complete genome sequence of the plant growth-promoting endophyte Burkholderia phytofirmans strain PsJN.</title>
        <authorList>
            <person name="Weilharter A."/>
            <person name="Mitter B."/>
            <person name="Shin M.V."/>
            <person name="Chain P.S."/>
            <person name="Nowak J."/>
            <person name="Sessitsch A."/>
        </authorList>
    </citation>
    <scope>NUCLEOTIDE SEQUENCE [LARGE SCALE GENOMIC DNA]</scope>
    <source>
        <strain>DSM 17436 / LMG 22146 / PsJN</strain>
    </source>
</reference>
<feature type="chain" id="PRO_1000139106" description="Uracil phosphoribosyltransferase">
    <location>
        <begin position="1"/>
        <end position="216"/>
    </location>
</feature>
<feature type="binding site" evidence="1">
    <location>
        <position position="85"/>
    </location>
    <ligand>
        <name>5-phospho-alpha-D-ribose 1-diphosphate</name>
        <dbReference type="ChEBI" id="CHEBI:58017"/>
    </ligand>
</feature>
<feature type="binding site" evidence="1">
    <location>
        <position position="110"/>
    </location>
    <ligand>
        <name>5-phospho-alpha-D-ribose 1-diphosphate</name>
        <dbReference type="ChEBI" id="CHEBI:58017"/>
    </ligand>
</feature>
<feature type="binding site" evidence="1">
    <location>
        <begin position="135"/>
        <end position="143"/>
    </location>
    <ligand>
        <name>5-phospho-alpha-D-ribose 1-diphosphate</name>
        <dbReference type="ChEBI" id="CHEBI:58017"/>
    </ligand>
</feature>
<feature type="binding site" evidence="1">
    <location>
        <position position="200"/>
    </location>
    <ligand>
        <name>uracil</name>
        <dbReference type="ChEBI" id="CHEBI:17568"/>
    </ligand>
</feature>
<feature type="binding site" evidence="1">
    <location>
        <begin position="205"/>
        <end position="207"/>
    </location>
    <ligand>
        <name>uracil</name>
        <dbReference type="ChEBI" id="CHEBI:17568"/>
    </ligand>
</feature>
<feature type="binding site" evidence="1">
    <location>
        <position position="206"/>
    </location>
    <ligand>
        <name>5-phospho-alpha-D-ribose 1-diphosphate</name>
        <dbReference type="ChEBI" id="CHEBI:58017"/>
    </ligand>
</feature>
<evidence type="ECO:0000255" key="1">
    <source>
        <dbReference type="HAMAP-Rule" id="MF_01218"/>
    </source>
</evidence>
<proteinExistence type="inferred from homology"/>
<name>UPP_PARPJ</name>
<protein>
    <recommendedName>
        <fullName evidence="1">Uracil phosphoribosyltransferase</fullName>
        <ecNumber evidence="1">2.4.2.9</ecNumber>
    </recommendedName>
    <alternativeName>
        <fullName evidence="1">UMP pyrophosphorylase</fullName>
    </alternativeName>
    <alternativeName>
        <fullName evidence="1">UPRTase</fullName>
    </alternativeName>
</protein>
<dbReference type="EC" id="2.4.2.9" evidence="1"/>
<dbReference type="EMBL" id="CP001052">
    <property type="protein sequence ID" value="ACD15717.1"/>
    <property type="molecule type" value="Genomic_DNA"/>
</dbReference>
<dbReference type="RefSeq" id="WP_012432337.1">
    <property type="nucleotide sequence ID" value="NC_010681.1"/>
</dbReference>
<dbReference type="SMR" id="B2T2A6"/>
<dbReference type="STRING" id="398527.Bphyt_1302"/>
<dbReference type="GeneID" id="97309912"/>
<dbReference type="KEGG" id="bpy:Bphyt_1302"/>
<dbReference type="eggNOG" id="COG0035">
    <property type="taxonomic scope" value="Bacteria"/>
</dbReference>
<dbReference type="HOGENOM" id="CLU_067096_2_2_4"/>
<dbReference type="OrthoDB" id="9781675at2"/>
<dbReference type="UniPathway" id="UPA00574">
    <property type="reaction ID" value="UER00636"/>
</dbReference>
<dbReference type="Proteomes" id="UP000001739">
    <property type="component" value="Chromosome 1"/>
</dbReference>
<dbReference type="GO" id="GO:0005525">
    <property type="term" value="F:GTP binding"/>
    <property type="evidence" value="ECO:0007669"/>
    <property type="project" value="UniProtKB-KW"/>
</dbReference>
<dbReference type="GO" id="GO:0000287">
    <property type="term" value="F:magnesium ion binding"/>
    <property type="evidence" value="ECO:0007669"/>
    <property type="project" value="UniProtKB-UniRule"/>
</dbReference>
<dbReference type="GO" id="GO:0004845">
    <property type="term" value="F:uracil phosphoribosyltransferase activity"/>
    <property type="evidence" value="ECO:0007669"/>
    <property type="project" value="UniProtKB-UniRule"/>
</dbReference>
<dbReference type="GO" id="GO:0044206">
    <property type="term" value="P:UMP salvage"/>
    <property type="evidence" value="ECO:0007669"/>
    <property type="project" value="UniProtKB-UniRule"/>
</dbReference>
<dbReference type="GO" id="GO:0006223">
    <property type="term" value="P:uracil salvage"/>
    <property type="evidence" value="ECO:0007669"/>
    <property type="project" value="InterPro"/>
</dbReference>
<dbReference type="CDD" id="cd06223">
    <property type="entry name" value="PRTases_typeI"/>
    <property type="match status" value="1"/>
</dbReference>
<dbReference type="FunFam" id="3.40.50.2020:FF:000003">
    <property type="entry name" value="Uracil phosphoribosyltransferase"/>
    <property type="match status" value="1"/>
</dbReference>
<dbReference type="Gene3D" id="3.40.50.2020">
    <property type="match status" value="1"/>
</dbReference>
<dbReference type="HAMAP" id="MF_01218_B">
    <property type="entry name" value="Upp_B"/>
    <property type="match status" value="1"/>
</dbReference>
<dbReference type="InterPro" id="IPR000836">
    <property type="entry name" value="PRibTrfase_dom"/>
</dbReference>
<dbReference type="InterPro" id="IPR029057">
    <property type="entry name" value="PRTase-like"/>
</dbReference>
<dbReference type="InterPro" id="IPR034332">
    <property type="entry name" value="Upp_B"/>
</dbReference>
<dbReference type="InterPro" id="IPR050054">
    <property type="entry name" value="UPRTase/APRTase"/>
</dbReference>
<dbReference type="InterPro" id="IPR005765">
    <property type="entry name" value="Ura_phspho_trans"/>
</dbReference>
<dbReference type="NCBIfam" id="NF001097">
    <property type="entry name" value="PRK00129.1"/>
    <property type="match status" value="1"/>
</dbReference>
<dbReference type="NCBIfam" id="TIGR01091">
    <property type="entry name" value="upp"/>
    <property type="match status" value="1"/>
</dbReference>
<dbReference type="PANTHER" id="PTHR32315">
    <property type="entry name" value="ADENINE PHOSPHORIBOSYLTRANSFERASE"/>
    <property type="match status" value="1"/>
</dbReference>
<dbReference type="PANTHER" id="PTHR32315:SF4">
    <property type="entry name" value="URACIL PHOSPHORIBOSYLTRANSFERASE, CHLOROPLASTIC"/>
    <property type="match status" value="1"/>
</dbReference>
<dbReference type="Pfam" id="PF14681">
    <property type="entry name" value="UPRTase"/>
    <property type="match status" value="1"/>
</dbReference>
<dbReference type="SUPFAM" id="SSF53271">
    <property type="entry name" value="PRTase-like"/>
    <property type="match status" value="1"/>
</dbReference>
<organism>
    <name type="scientific">Paraburkholderia phytofirmans (strain DSM 17436 / LMG 22146 / PsJN)</name>
    <name type="common">Burkholderia phytofirmans</name>
    <dbReference type="NCBI Taxonomy" id="398527"/>
    <lineage>
        <taxon>Bacteria</taxon>
        <taxon>Pseudomonadati</taxon>
        <taxon>Pseudomonadota</taxon>
        <taxon>Betaproteobacteria</taxon>
        <taxon>Burkholderiales</taxon>
        <taxon>Burkholderiaceae</taxon>
        <taxon>Paraburkholderia</taxon>
    </lineage>
</organism>
<gene>
    <name evidence="1" type="primary">upp</name>
    <name type="ordered locus">Bphyt_1302</name>
</gene>
<comment type="function">
    <text evidence="1">Catalyzes the conversion of uracil and 5-phospho-alpha-D-ribose 1-diphosphate (PRPP) to UMP and diphosphate.</text>
</comment>
<comment type="catalytic activity">
    <reaction evidence="1">
        <text>UMP + diphosphate = 5-phospho-alpha-D-ribose 1-diphosphate + uracil</text>
        <dbReference type="Rhea" id="RHEA:13017"/>
        <dbReference type="ChEBI" id="CHEBI:17568"/>
        <dbReference type="ChEBI" id="CHEBI:33019"/>
        <dbReference type="ChEBI" id="CHEBI:57865"/>
        <dbReference type="ChEBI" id="CHEBI:58017"/>
        <dbReference type="EC" id="2.4.2.9"/>
    </reaction>
</comment>
<comment type="cofactor">
    <cofactor evidence="1">
        <name>Mg(2+)</name>
        <dbReference type="ChEBI" id="CHEBI:18420"/>
    </cofactor>
    <text evidence="1">Binds 1 Mg(2+) ion per subunit. The magnesium is bound as Mg-PRPP.</text>
</comment>
<comment type="activity regulation">
    <text evidence="1">Allosterically activated by GTP.</text>
</comment>
<comment type="pathway">
    <text evidence="1">Pyrimidine metabolism; UMP biosynthesis via salvage pathway; UMP from uracil: step 1/1.</text>
</comment>
<comment type="similarity">
    <text evidence="1">Belongs to the UPRTase family.</text>
</comment>
<accession>B2T2A6</accession>
<sequence length="216" mass="24110">MTQDSRFPNLFILDHPLIQHKLSHMRDRDTSTRTFRELLREITLLMGYEITRNLPMTTRRLTTPLVEIDAPVIAGKKLAIVPVLRAGIGMSDGLLELVPSARVGHIGVYRAEDHRPVEYLVRLPDLEDRVFILCDPMVATGYSAVHAVDVLKRRNVAGENIMFLALVAAPEGVQVFQDAHPDVKLYVASLDSHLNEHAYIVPGLGDAGDRLFGTKN</sequence>
<keyword id="KW-0021">Allosteric enzyme</keyword>
<keyword id="KW-0328">Glycosyltransferase</keyword>
<keyword id="KW-0342">GTP-binding</keyword>
<keyword id="KW-0460">Magnesium</keyword>
<keyword id="KW-0547">Nucleotide-binding</keyword>
<keyword id="KW-0808">Transferase</keyword>